<keyword id="KW-0028">Amino-acid biosynthesis</keyword>
<keyword id="KW-0057">Aromatic amino acid biosynthesis</keyword>
<keyword id="KW-0210">Decarboxylase</keyword>
<keyword id="KW-0456">Lyase</keyword>
<keyword id="KW-1185">Reference proteome</keyword>
<keyword id="KW-0822">Tryptophan biosynthesis</keyword>
<comment type="catalytic activity">
    <reaction evidence="1">
        <text>1-(2-carboxyphenylamino)-1-deoxy-D-ribulose 5-phosphate + H(+) = (1S,2R)-1-C-(indol-3-yl)glycerol 3-phosphate + CO2 + H2O</text>
        <dbReference type="Rhea" id="RHEA:23476"/>
        <dbReference type="ChEBI" id="CHEBI:15377"/>
        <dbReference type="ChEBI" id="CHEBI:15378"/>
        <dbReference type="ChEBI" id="CHEBI:16526"/>
        <dbReference type="ChEBI" id="CHEBI:58613"/>
        <dbReference type="ChEBI" id="CHEBI:58866"/>
        <dbReference type="EC" id="4.1.1.48"/>
    </reaction>
</comment>
<comment type="pathway">
    <text evidence="1">Amino-acid biosynthesis; L-tryptophan biosynthesis; L-tryptophan from chorismate: step 4/5.</text>
</comment>
<comment type="similarity">
    <text evidence="1">Belongs to the TrpC family.</text>
</comment>
<protein>
    <recommendedName>
        <fullName evidence="1">Indole-3-glycerol phosphate synthase</fullName>
        <shortName evidence="1">IGPS</shortName>
        <ecNumber evidence="1">4.1.1.48</ecNumber>
    </recommendedName>
</protein>
<gene>
    <name evidence="1" type="primary">trpC</name>
    <name type="ordered locus">Rru_A1897</name>
</gene>
<proteinExistence type="inferred from homology"/>
<dbReference type="EC" id="4.1.1.48" evidence="1"/>
<dbReference type="EMBL" id="CP000230">
    <property type="protein sequence ID" value="ABC22697.1"/>
    <property type="molecule type" value="Genomic_DNA"/>
</dbReference>
<dbReference type="RefSeq" id="WP_011389650.1">
    <property type="nucleotide sequence ID" value="NC_007643.1"/>
</dbReference>
<dbReference type="RefSeq" id="YP_426984.1">
    <property type="nucleotide sequence ID" value="NC_007643.1"/>
</dbReference>
<dbReference type="SMR" id="Q2RT48"/>
<dbReference type="STRING" id="269796.Rru_A1897"/>
<dbReference type="EnsemblBacteria" id="ABC22697">
    <property type="protein sequence ID" value="ABC22697"/>
    <property type="gene ID" value="Rru_A1897"/>
</dbReference>
<dbReference type="KEGG" id="rru:Rru_A1897"/>
<dbReference type="PATRIC" id="fig|269796.9.peg.1978"/>
<dbReference type="eggNOG" id="COG0134">
    <property type="taxonomic scope" value="Bacteria"/>
</dbReference>
<dbReference type="HOGENOM" id="CLU_034247_2_0_5"/>
<dbReference type="PhylomeDB" id="Q2RT48"/>
<dbReference type="UniPathway" id="UPA00035">
    <property type="reaction ID" value="UER00043"/>
</dbReference>
<dbReference type="Proteomes" id="UP000001929">
    <property type="component" value="Chromosome"/>
</dbReference>
<dbReference type="GO" id="GO:0004425">
    <property type="term" value="F:indole-3-glycerol-phosphate synthase activity"/>
    <property type="evidence" value="ECO:0007669"/>
    <property type="project" value="UniProtKB-UniRule"/>
</dbReference>
<dbReference type="GO" id="GO:0004640">
    <property type="term" value="F:phosphoribosylanthranilate isomerase activity"/>
    <property type="evidence" value="ECO:0007669"/>
    <property type="project" value="TreeGrafter"/>
</dbReference>
<dbReference type="GO" id="GO:0000162">
    <property type="term" value="P:L-tryptophan biosynthetic process"/>
    <property type="evidence" value="ECO:0007669"/>
    <property type="project" value="UniProtKB-UniRule"/>
</dbReference>
<dbReference type="CDD" id="cd00331">
    <property type="entry name" value="IGPS"/>
    <property type="match status" value="1"/>
</dbReference>
<dbReference type="FunFam" id="3.20.20.70:FF:000024">
    <property type="entry name" value="Indole-3-glycerol phosphate synthase"/>
    <property type="match status" value="1"/>
</dbReference>
<dbReference type="Gene3D" id="3.20.20.70">
    <property type="entry name" value="Aldolase class I"/>
    <property type="match status" value="1"/>
</dbReference>
<dbReference type="HAMAP" id="MF_00134_B">
    <property type="entry name" value="IGPS_B"/>
    <property type="match status" value="1"/>
</dbReference>
<dbReference type="InterPro" id="IPR013785">
    <property type="entry name" value="Aldolase_TIM"/>
</dbReference>
<dbReference type="InterPro" id="IPR045186">
    <property type="entry name" value="Indole-3-glycerol_P_synth"/>
</dbReference>
<dbReference type="InterPro" id="IPR013798">
    <property type="entry name" value="Indole-3-glycerol_P_synth_dom"/>
</dbReference>
<dbReference type="InterPro" id="IPR001468">
    <property type="entry name" value="Indole-3-GlycerolPSynthase_CS"/>
</dbReference>
<dbReference type="InterPro" id="IPR011060">
    <property type="entry name" value="RibuloseP-bd_barrel"/>
</dbReference>
<dbReference type="NCBIfam" id="NF001370">
    <property type="entry name" value="PRK00278.1-2"/>
    <property type="match status" value="1"/>
</dbReference>
<dbReference type="NCBIfam" id="NF001373">
    <property type="entry name" value="PRK00278.1-6"/>
    <property type="match status" value="1"/>
</dbReference>
<dbReference type="NCBIfam" id="NF001377">
    <property type="entry name" value="PRK00278.2-4"/>
    <property type="match status" value="1"/>
</dbReference>
<dbReference type="PANTHER" id="PTHR22854:SF2">
    <property type="entry name" value="INDOLE-3-GLYCEROL-PHOSPHATE SYNTHASE"/>
    <property type="match status" value="1"/>
</dbReference>
<dbReference type="PANTHER" id="PTHR22854">
    <property type="entry name" value="TRYPTOPHAN BIOSYNTHESIS PROTEIN"/>
    <property type="match status" value="1"/>
</dbReference>
<dbReference type="Pfam" id="PF00218">
    <property type="entry name" value="IGPS"/>
    <property type="match status" value="1"/>
</dbReference>
<dbReference type="SUPFAM" id="SSF51366">
    <property type="entry name" value="Ribulose-phoshate binding barrel"/>
    <property type="match status" value="1"/>
</dbReference>
<dbReference type="PROSITE" id="PS00614">
    <property type="entry name" value="IGPS"/>
    <property type="match status" value="1"/>
</dbReference>
<sequence length="263" mass="28201">MSDILREICDTTRAEVARRKAALPLADVTARAEDANAPRGFANALTRTADSGRPALIAEIKKASPSAGLIRPDFNPAVLARAYHAAGATCLSVLTDGPYFQGHADFLIAARAAVPLPVLRKDFMVDPWQVVEARAMGADCILVILAALDDGAAAEIEACAHDWGMDVLAEVHNEEECARALTCLTTPLLGVNNRNLKTLVTDLAVTERLAKMVPADRVLVAESGLRTRKDLDRMTAVGARRFLIGEHFMRQPDVGDAVRALIG</sequence>
<accession>Q2RT48</accession>
<organism>
    <name type="scientific">Rhodospirillum rubrum (strain ATCC 11170 / ATH 1.1.1 / DSM 467 / LMG 4362 / NCIMB 8255 / S1)</name>
    <dbReference type="NCBI Taxonomy" id="269796"/>
    <lineage>
        <taxon>Bacteria</taxon>
        <taxon>Pseudomonadati</taxon>
        <taxon>Pseudomonadota</taxon>
        <taxon>Alphaproteobacteria</taxon>
        <taxon>Rhodospirillales</taxon>
        <taxon>Rhodospirillaceae</taxon>
        <taxon>Rhodospirillum</taxon>
    </lineage>
</organism>
<feature type="chain" id="PRO_1000018547" description="Indole-3-glycerol phosphate synthase">
    <location>
        <begin position="1"/>
        <end position="263"/>
    </location>
</feature>
<evidence type="ECO:0000255" key="1">
    <source>
        <dbReference type="HAMAP-Rule" id="MF_00134"/>
    </source>
</evidence>
<name>TRPC_RHORT</name>
<reference key="1">
    <citation type="journal article" date="2011" name="Stand. Genomic Sci.">
        <title>Complete genome sequence of Rhodospirillum rubrum type strain (S1).</title>
        <authorList>
            <person name="Munk A.C."/>
            <person name="Copeland A."/>
            <person name="Lucas S."/>
            <person name="Lapidus A."/>
            <person name="Del Rio T.G."/>
            <person name="Barry K."/>
            <person name="Detter J.C."/>
            <person name="Hammon N."/>
            <person name="Israni S."/>
            <person name="Pitluck S."/>
            <person name="Brettin T."/>
            <person name="Bruce D."/>
            <person name="Han C."/>
            <person name="Tapia R."/>
            <person name="Gilna P."/>
            <person name="Schmutz J."/>
            <person name="Larimer F."/>
            <person name="Land M."/>
            <person name="Kyrpides N.C."/>
            <person name="Mavromatis K."/>
            <person name="Richardson P."/>
            <person name="Rohde M."/>
            <person name="Goeker M."/>
            <person name="Klenk H.P."/>
            <person name="Zhang Y."/>
            <person name="Roberts G.P."/>
            <person name="Reslewic S."/>
            <person name="Schwartz D.C."/>
        </authorList>
    </citation>
    <scope>NUCLEOTIDE SEQUENCE [LARGE SCALE GENOMIC DNA]</scope>
    <source>
        <strain>ATCC 11170 / ATH 1.1.1 / DSM 467 / LMG 4362 / NCIMB 8255 / S1</strain>
    </source>
</reference>